<gene>
    <name type="primary">rpmF</name>
</gene>
<reference key="1">
    <citation type="journal article" date="1984" name="FEBS Lett.">
        <title>The amino acid sequence of two small ribosomal proteins from Bacillus stearothermophilus.</title>
        <authorList>
            <person name="Tanaka I."/>
            <person name="Kimura M."/>
            <person name="Kimura J."/>
            <person name="Dijk J."/>
        </authorList>
    </citation>
    <scope>PROTEIN SEQUENCE OF 2-57</scope>
</reference>
<evidence type="ECO:0000269" key="1">
    <source>
    </source>
</evidence>
<evidence type="ECO:0000305" key="2"/>
<feature type="initiator methionine" description="Removed" evidence="1">
    <location>
        <position position="1"/>
    </location>
</feature>
<feature type="chain" id="PRO_0000172305" description="Large ribosomal subunit protein bL32">
    <location>
        <begin position="2"/>
        <end position="57"/>
    </location>
</feature>
<protein>
    <recommendedName>
        <fullName evidence="2">Large ribosomal subunit protein bL32</fullName>
    </recommendedName>
    <alternativeName>
        <fullName>50S ribosomal protein L32</fullName>
        <shortName>Ribosomal protein I</shortName>
    </alternativeName>
    <alternativeName>
        <fullName>BL37</fullName>
    </alternativeName>
</protein>
<dbReference type="PIR" id="S07236">
    <property type="entry name" value="R5BS37"/>
</dbReference>
<dbReference type="RefSeq" id="WP_011230605.1">
    <property type="nucleotide sequence ID" value="NZ_RCTK01000001.1"/>
</dbReference>
<dbReference type="SMR" id="P07840"/>
<dbReference type="GeneID" id="89611677"/>
<dbReference type="OrthoDB" id="9812874at2"/>
<dbReference type="GO" id="GO:0015934">
    <property type="term" value="C:large ribosomal subunit"/>
    <property type="evidence" value="ECO:0007669"/>
    <property type="project" value="InterPro"/>
</dbReference>
<dbReference type="GO" id="GO:0003735">
    <property type="term" value="F:structural constituent of ribosome"/>
    <property type="evidence" value="ECO:0007669"/>
    <property type="project" value="InterPro"/>
</dbReference>
<dbReference type="GO" id="GO:0006412">
    <property type="term" value="P:translation"/>
    <property type="evidence" value="ECO:0007669"/>
    <property type="project" value="UniProtKB-UniRule"/>
</dbReference>
<dbReference type="HAMAP" id="MF_00340">
    <property type="entry name" value="Ribosomal_bL32"/>
    <property type="match status" value="1"/>
</dbReference>
<dbReference type="InterPro" id="IPR002677">
    <property type="entry name" value="Ribosomal_bL32"/>
</dbReference>
<dbReference type="InterPro" id="IPR044957">
    <property type="entry name" value="Ribosomal_bL32_bact"/>
</dbReference>
<dbReference type="InterPro" id="IPR011332">
    <property type="entry name" value="Ribosomal_zn-bd"/>
</dbReference>
<dbReference type="NCBIfam" id="TIGR01031">
    <property type="entry name" value="rpmF_bact"/>
    <property type="match status" value="1"/>
</dbReference>
<dbReference type="PANTHER" id="PTHR35534">
    <property type="entry name" value="50S RIBOSOMAL PROTEIN L32"/>
    <property type="match status" value="1"/>
</dbReference>
<dbReference type="PANTHER" id="PTHR35534:SF2">
    <property type="entry name" value="LARGE RIBOSOMAL SUBUNIT PROTEIN BL32"/>
    <property type="match status" value="1"/>
</dbReference>
<dbReference type="Pfam" id="PF01783">
    <property type="entry name" value="Ribosomal_L32p"/>
    <property type="match status" value="1"/>
</dbReference>
<dbReference type="SUPFAM" id="SSF57829">
    <property type="entry name" value="Zn-binding ribosomal proteins"/>
    <property type="match status" value="1"/>
</dbReference>
<sequence>MAVPFRRTSKTRKRLRRTHFKLQVPGMVQCPNCGEWKLAHRVCKACGTYKGRDVVNK</sequence>
<organism>
    <name type="scientific">Geobacillus stearothermophilus</name>
    <name type="common">Bacillus stearothermophilus</name>
    <dbReference type="NCBI Taxonomy" id="1422"/>
    <lineage>
        <taxon>Bacteria</taxon>
        <taxon>Bacillati</taxon>
        <taxon>Bacillota</taxon>
        <taxon>Bacilli</taxon>
        <taxon>Bacillales</taxon>
        <taxon>Anoxybacillaceae</taxon>
        <taxon>Geobacillus</taxon>
    </lineage>
</organism>
<keyword id="KW-0903">Direct protein sequencing</keyword>
<keyword id="KW-0687">Ribonucleoprotein</keyword>
<keyword id="KW-0689">Ribosomal protein</keyword>
<proteinExistence type="evidence at protein level"/>
<comment type="similarity">
    <text evidence="2">Belongs to the bacterial ribosomal protein bL32 family.</text>
</comment>
<name>RL32_GEOSE</name>
<accession>P07840</accession>